<feature type="chain" id="PRO_1000149092" description="Histidinol-phosphate aminotransferase">
    <location>
        <begin position="1"/>
        <end position="360"/>
    </location>
</feature>
<feature type="modified residue" description="N6-(pyridoxal phosphate)lysine" evidence="1">
    <location>
        <position position="221"/>
    </location>
</feature>
<reference key="1">
    <citation type="journal article" date="2012" name="BMC Microbiol.">
        <title>Genome sequence of Desulfitobacterium hafniense DCB-2, a Gram-positive anaerobe capable of dehalogenation and metal reduction.</title>
        <authorList>
            <person name="Kim S.H."/>
            <person name="Harzman C."/>
            <person name="Davis J.K."/>
            <person name="Hutcheson R."/>
            <person name="Broderick J.B."/>
            <person name="Marsh T.L."/>
            <person name="Tiedje J.M."/>
        </authorList>
    </citation>
    <scope>NUCLEOTIDE SEQUENCE [LARGE SCALE GENOMIC DNA]</scope>
    <source>
        <strain>DSM 10664 / DCB-2</strain>
    </source>
</reference>
<accession>B8FP20</accession>
<keyword id="KW-0028">Amino-acid biosynthesis</keyword>
<keyword id="KW-0032">Aminotransferase</keyword>
<keyword id="KW-0368">Histidine biosynthesis</keyword>
<keyword id="KW-0663">Pyridoxal phosphate</keyword>
<keyword id="KW-0808">Transferase</keyword>
<organism>
    <name type="scientific">Desulfitobacterium hafniense (strain DSM 10664 / DCB-2)</name>
    <dbReference type="NCBI Taxonomy" id="272564"/>
    <lineage>
        <taxon>Bacteria</taxon>
        <taxon>Bacillati</taxon>
        <taxon>Bacillota</taxon>
        <taxon>Clostridia</taxon>
        <taxon>Eubacteriales</taxon>
        <taxon>Desulfitobacteriaceae</taxon>
        <taxon>Desulfitobacterium</taxon>
    </lineage>
</organism>
<sequence>MVDKMNLEEWMRPSIRTLKAYESKSIPDCVRLDANENPLPWPPGMIEQLLGSAIAFNRYPDGGAQELKEALSRYTGVPAEGILTGNGSDELIQLLMTTFGGEKGAVVIHPPTFSMYEAAARVTGTEVLEVPLLLTETSRDFRLDVEGILKAAAQPQVHMIVLCNPNNPTGTLFPREEILRIVAESGKIVIVDEAYGEFSGESVVDQIPYCPNLLVMKTFSKLFAMAALRLGYLLGQPSIIGALNRARQPFNVNSFSQKAGVIALNYGEEYAEQGRILIAELARIAEALTAFASVKVFATRANFLLFQPEDPDRVYQELIGKGFLIRTMGNLPLVGKALRLSTGLPEENERLIKALGEILK</sequence>
<name>HIS8_DESHD</name>
<gene>
    <name evidence="1" type="primary">hisC</name>
    <name type="ordered locus">Dhaf_1493</name>
</gene>
<dbReference type="EC" id="2.6.1.9" evidence="1"/>
<dbReference type="EMBL" id="CP001336">
    <property type="protein sequence ID" value="ACL19545.1"/>
    <property type="molecule type" value="Genomic_DNA"/>
</dbReference>
<dbReference type="RefSeq" id="WP_015943472.1">
    <property type="nucleotide sequence ID" value="NC_011830.1"/>
</dbReference>
<dbReference type="SMR" id="B8FP20"/>
<dbReference type="KEGG" id="dhd:Dhaf_1493"/>
<dbReference type="HOGENOM" id="CLU_017584_3_1_9"/>
<dbReference type="UniPathway" id="UPA00031">
    <property type="reaction ID" value="UER00012"/>
</dbReference>
<dbReference type="Proteomes" id="UP000007726">
    <property type="component" value="Chromosome"/>
</dbReference>
<dbReference type="GO" id="GO:0004400">
    <property type="term" value="F:histidinol-phosphate transaminase activity"/>
    <property type="evidence" value="ECO:0007669"/>
    <property type="project" value="UniProtKB-UniRule"/>
</dbReference>
<dbReference type="GO" id="GO:0030170">
    <property type="term" value="F:pyridoxal phosphate binding"/>
    <property type="evidence" value="ECO:0007669"/>
    <property type="project" value="InterPro"/>
</dbReference>
<dbReference type="GO" id="GO:0000105">
    <property type="term" value="P:L-histidine biosynthetic process"/>
    <property type="evidence" value="ECO:0007669"/>
    <property type="project" value="UniProtKB-UniRule"/>
</dbReference>
<dbReference type="CDD" id="cd00609">
    <property type="entry name" value="AAT_like"/>
    <property type="match status" value="1"/>
</dbReference>
<dbReference type="Gene3D" id="3.90.1150.10">
    <property type="entry name" value="Aspartate Aminotransferase, domain 1"/>
    <property type="match status" value="1"/>
</dbReference>
<dbReference type="Gene3D" id="3.40.640.10">
    <property type="entry name" value="Type I PLP-dependent aspartate aminotransferase-like (Major domain)"/>
    <property type="match status" value="1"/>
</dbReference>
<dbReference type="HAMAP" id="MF_01023">
    <property type="entry name" value="HisC_aminotrans_2"/>
    <property type="match status" value="1"/>
</dbReference>
<dbReference type="InterPro" id="IPR004839">
    <property type="entry name" value="Aminotransferase_I/II_large"/>
</dbReference>
<dbReference type="InterPro" id="IPR005861">
    <property type="entry name" value="HisP_aminotrans"/>
</dbReference>
<dbReference type="InterPro" id="IPR050106">
    <property type="entry name" value="HistidinolP_aminotransfase"/>
</dbReference>
<dbReference type="InterPro" id="IPR015424">
    <property type="entry name" value="PyrdxlP-dep_Trfase"/>
</dbReference>
<dbReference type="InterPro" id="IPR015421">
    <property type="entry name" value="PyrdxlP-dep_Trfase_major"/>
</dbReference>
<dbReference type="InterPro" id="IPR015422">
    <property type="entry name" value="PyrdxlP-dep_Trfase_small"/>
</dbReference>
<dbReference type="NCBIfam" id="TIGR01141">
    <property type="entry name" value="hisC"/>
    <property type="match status" value="1"/>
</dbReference>
<dbReference type="PANTHER" id="PTHR43643:SF6">
    <property type="entry name" value="HISTIDINOL-PHOSPHATE AMINOTRANSFERASE"/>
    <property type="match status" value="1"/>
</dbReference>
<dbReference type="PANTHER" id="PTHR43643">
    <property type="entry name" value="HISTIDINOL-PHOSPHATE AMINOTRANSFERASE 2"/>
    <property type="match status" value="1"/>
</dbReference>
<dbReference type="Pfam" id="PF00155">
    <property type="entry name" value="Aminotran_1_2"/>
    <property type="match status" value="1"/>
</dbReference>
<dbReference type="SUPFAM" id="SSF53383">
    <property type="entry name" value="PLP-dependent transferases"/>
    <property type="match status" value="1"/>
</dbReference>
<proteinExistence type="inferred from homology"/>
<evidence type="ECO:0000255" key="1">
    <source>
        <dbReference type="HAMAP-Rule" id="MF_01023"/>
    </source>
</evidence>
<comment type="catalytic activity">
    <reaction evidence="1">
        <text>L-histidinol phosphate + 2-oxoglutarate = 3-(imidazol-4-yl)-2-oxopropyl phosphate + L-glutamate</text>
        <dbReference type="Rhea" id="RHEA:23744"/>
        <dbReference type="ChEBI" id="CHEBI:16810"/>
        <dbReference type="ChEBI" id="CHEBI:29985"/>
        <dbReference type="ChEBI" id="CHEBI:57766"/>
        <dbReference type="ChEBI" id="CHEBI:57980"/>
        <dbReference type="EC" id="2.6.1.9"/>
    </reaction>
</comment>
<comment type="cofactor">
    <cofactor evidence="1">
        <name>pyridoxal 5'-phosphate</name>
        <dbReference type="ChEBI" id="CHEBI:597326"/>
    </cofactor>
</comment>
<comment type="pathway">
    <text evidence="1">Amino-acid biosynthesis; L-histidine biosynthesis; L-histidine from 5-phospho-alpha-D-ribose 1-diphosphate: step 7/9.</text>
</comment>
<comment type="subunit">
    <text evidence="1">Homodimer.</text>
</comment>
<comment type="similarity">
    <text evidence="1">Belongs to the class-II pyridoxal-phosphate-dependent aminotransferase family. Histidinol-phosphate aminotransferase subfamily.</text>
</comment>
<protein>
    <recommendedName>
        <fullName evidence="1">Histidinol-phosphate aminotransferase</fullName>
        <ecNumber evidence="1">2.6.1.9</ecNumber>
    </recommendedName>
    <alternativeName>
        <fullName evidence="1">Imidazole acetol-phosphate transaminase</fullName>
    </alternativeName>
</protein>